<dbReference type="EC" id="2.7.7.7" evidence="2"/>
<dbReference type="EC" id="4.2.99.-" evidence="2"/>
<dbReference type="EC" id="4.2.99.18" evidence="2"/>
<dbReference type="EMBL" id="Y15732">
    <property type="protein sequence ID" value="CAA75741.1"/>
    <property type="molecule type" value="mRNA"/>
</dbReference>
<dbReference type="EMBL" id="BC106329">
    <property type="protein sequence ID" value="AAI06330.1"/>
    <property type="molecule type" value="mRNA"/>
</dbReference>
<dbReference type="RefSeq" id="NP_001081643.1">
    <property type="nucleotide sequence ID" value="NM_001088174.1"/>
</dbReference>
<dbReference type="SMR" id="O57383"/>
<dbReference type="GeneID" id="397973"/>
<dbReference type="KEGG" id="xla:397973"/>
<dbReference type="AGR" id="Xenbase:XB-GENE-999702"/>
<dbReference type="CTD" id="397973"/>
<dbReference type="Xenbase" id="XB-GENE-999702">
    <property type="gene designation" value="polb.S"/>
</dbReference>
<dbReference type="OMA" id="ERDVFDW"/>
<dbReference type="OrthoDB" id="205514at2759"/>
<dbReference type="Proteomes" id="UP000186698">
    <property type="component" value="Chromosome 3S"/>
</dbReference>
<dbReference type="Bgee" id="397973">
    <property type="expression patterns" value="Expressed in blastula and 19 other cell types or tissues"/>
</dbReference>
<dbReference type="GO" id="GO:0005737">
    <property type="term" value="C:cytoplasm"/>
    <property type="evidence" value="ECO:0000250"/>
    <property type="project" value="UniProtKB"/>
</dbReference>
<dbReference type="GO" id="GO:0005634">
    <property type="term" value="C:nucleus"/>
    <property type="evidence" value="ECO:0000250"/>
    <property type="project" value="UniProtKB"/>
</dbReference>
<dbReference type="GO" id="GO:0051575">
    <property type="term" value="F:5'-deoxyribose-5-phosphate lyase activity"/>
    <property type="evidence" value="ECO:0007669"/>
    <property type="project" value="RHEA"/>
</dbReference>
<dbReference type="GO" id="GO:0140078">
    <property type="term" value="F:class I DNA-(apurinic or apyrimidinic site) endonuclease activity"/>
    <property type="evidence" value="ECO:0007669"/>
    <property type="project" value="RHEA"/>
</dbReference>
<dbReference type="GO" id="GO:0003677">
    <property type="term" value="F:DNA binding"/>
    <property type="evidence" value="ECO:0007669"/>
    <property type="project" value="UniProtKB-KW"/>
</dbReference>
<dbReference type="GO" id="GO:0003887">
    <property type="term" value="F:DNA-directed DNA polymerase activity"/>
    <property type="evidence" value="ECO:0000318"/>
    <property type="project" value="GO_Central"/>
</dbReference>
<dbReference type="GO" id="GO:0046872">
    <property type="term" value="F:metal ion binding"/>
    <property type="evidence" value="ECO:0007669"/>
    <property type="project" value="UniProtKB-KW"/>
</dbReference>
<dbReference type="GO" id="GO:0006284">
    <property type="term" value="P:base-excision repair"/>
    <property type="evidence" value="ECO:0000250"/>
    <property type="project" value="UniProtKB"/>
</dbReference>
<dbReference type="GO" id="GO:0006974">
    <property type="term" value="P:DNA damage response"/>
    <property type="evidence" value="ECO:0000250"/>
    <property type="project" value="UniProtKB"/>
</dbReference>
<dbReference type="GO" id="GO:0006260">
    <property type="term" value="P:DNA replication"/>
    <property type="evidence" value="ECO:0007669"/>
    <property type="project" value="UniProtKB-KW"/>
</dbReference>
<dbReference type="GO" id="GO:0006303">
    <property type="term" value="P:double-strand break repair via nonhomologous end joining"/>
    <property type="evidence" value="ECO:0000318"/>
    <property type="project" value="GO_Central"/>
</dbReference>
<dbReference type="CDD" id="cd00141">
    <property type="entry name" value="NT_POLXc"/>
    <property type="match status" value="1"/>
</dbReference>
<dbReference type="FunFam" id="1.10.150.110:FF:000002">
    <property type="entry name" value="DNA polymerase beta"/>
    <property type="match status" value="1"/>
</dbReference>
<dbReference type="FunFam" id="1.10.150.20:FF:000026">
    <property type="entry name" value="DNA polymerase beta"/>
    <property type="match status" value="1"/>
</dbReference>
<dbReference type="FunFam" id="3.30.210.10:FF:000008">
    <property type="entry name" value="DNA polymerase beta"/>
    <property type="match status" value="1"/>
</dbReference>
<dbReference type="FunFam" id="3.30.460.10:FF:000021">
    <property type="entry name" value="DNA polymerase beta"/>
    <property type="match status" value="1"/>
</dbReference>
<dbReference type="Gene3D" id="1.10.150.20">
    <property type="entry name" value="5' to 3' exonuclease, C-terminal subdomain"/>
    <property type="match status" value="1"/>
</dbReference>
<dbReference type="Gene3D" id="3.30.460.10">
    <property type="entry name" value="Beta Polymerase, domain 2"/>
    <property type="match status" value="1"/>
</dbReference>
<dbReference type="Gene3D" id="1.10.150.110">
    <property type="entry name" value="DNA polymerase beta, N-terminal domain-like"/>
    <property type="match status" value="1"/>
</dbReference>
<dbReference type="Gene3D" id="3.30.210.10">
    <property type="entry name" value="DNA polymerase, thumb domain"/>
    <property type="match status" value="1"/>
</dbReference>
<dbReference type="InterPro" id="IPR002054">
    <property type="entry name" value="DNA-dir_DNA_pol_X"/>
</dbReference>
<dbReference type="InterPro" id="IPR019843">
    <property type="entry name" value="DNA_pol-X_BS"/>
</dbReference>
<dbReference type="InterPro" id="IPR010996">
    <property type="entry name" value="DNA_pol_b-like_N"/>
</dbReference>
<dbReference type="InterPro" id="IPR028207">
    <property type="entry name" value="DNA_pol_B_palm_palm"/>
</dbReference>
<dbReference type="InterPro" id="IPR018944">
    <property type="entry name" value="DNA_pol_lambd_fingers_domain"/>
</dbReference>
<dbReference type="InterPro" id="IPR027421">
    <property type="entry name" value="DNA_pol_lamdba_lyase_dom_sf"/>
</dbReference>
<dbReference type="InterPro" id="IPR037160">
    <property type="entry name" value="DNA_Pol_thumb_sf"/>
</dbReference>
<dbReference type="InterPro" id="IPR022312">
    <property type="entry name" value="DNA_pol_X"/>
</dbReference>
<dbReference type="InterPro" id="IPR002008">
    <property type="entry name" value="DNA_pol_X_beta-like"/>
</dbReference>
<dbReference type="InterPro" id="IPR003583">
    <property type="entry name" value="Hlx-hairpin-Hlx_DNA-bd_motif"/>
</dbReference>
<dbReference type="InterPro" id="IPR043519">
    <property type="entry name" value="NT_sf"/>
</dbReference>
<dbReference type="InterPro" id="IPR029398">
    <property type="entry name" value="PolB_thumb"/>
</dbReference>
<dbReference type="PANTHER" id="PTHR11276:SF42">
    <property type="entry name" value="DNA POLYMERASE BETA"/>
    <property type="match status" value="1"/>
</dbReference>
<dbReference type="PANTHER" id="PTHR11276">
    <property type="entry name" value="DNA POLYMERASE TYPE-X FAMILY MEMBER"/>
    <property type="match status" value="1"/>
</dbReference>
<dbReference type="Pfam" id="PF14792">
    <property type="entry name" value="DNA_pol_B_palm"/>
    <property type="match status" value="1"/>
</dbReference>
<dbReference type="Pfam" id="PF14791">
    <property type="entry name" value="DNA_pol_B_thumb"/>
    <property type="match status" value="1"/>
</dbReference>
<dbReference type="Pfam" id="PF10391">
    <property type="entry name" value="DNA_pol_lambd_f"/>
    <property type="match status" value="1"/>
</dbReference>
<dbReference type="Pfam" id="PF14716">
    <property type="entry name" value="HHH_8"/>
    <property type="match status" value="1"/>
</dbReference>
<dbReference type="PRINTS" id="PR00869">
    <property type="entry name" value="DNAPOLX"/>
</dbReference>
<dbReference type="PRINTS" id="PR00870">
    <property type="entry name" value="DNAPOLXBETA"/>
</dbReference>
<dbReference type="SMART" id="SM00278">
    <property type="entry name" value="HhH1"/>
    <property type="match status" value="2"/>
</dbReference>
<dbReference type="SMART" id="SM00483">
    <property type="entry name" value="POLXc"/>
    <property type="match status" value="1"/>
</dbReference>
<dbReference type="SUPFAM" id="SSF47802">
    <property type="entry name" value="DNA polymerase beta, N-terminal domain-like"/>
    <property type="match status" value="1"/>
</dbReference>
<dbReference type="SUPFAM" id="SSF81301">
    <property type="entry name" value="Nucleotidyltransferase"/>
    <property type="match status" value="1"/>
</dbReference>
<dbReference type="SUPFAM" id="SSF81585">
    <property type="entry name" value="PsbU/PolX domain-like"/>
    <property type="match status" value="1"/>
</dbReference>
<dbReference type="PROSITE" id="PS00522">
    <property type="entry name" value="DNA_POLYMERASE_X"/>
    <property type="match status" value="1"/>
</dbReference>
<keyword id="KW-0963">Cytoplasm</keyword>
<keyword id="KW-0227">DNA damage</keyword>
<keyword id="KW-0234">DNA repair</keyword>
<keyword id="KW-0235">DNA replication</keyword>
<keyword id="KW-0237">DNA synthesis</keyword>
<keyword id="KW-0238">DNA-binding</keyword>
<keyword id="KW-0239">DNA-directed DNA polymerase</keyword>
<keyword id="KW-0456">Lyase</keyword>
<keyword id="KW-0460">Magnesium</keyword>
<keyword id="KW-0479">Metal-binding</keyword>
<keyword id="KW-0488">Methylation</keyword>
<keyword id="KW-0548">Nucleotidyltransferase</keyword>
<keyword id="KW-0539">Nucleus</keyword>
<keyword id="KW-0630">Potassium</keyword>
<keyword id="KW-1185">Reference proteome</keyword>
<keyword id="KW-0915">Sodium</keyword>
<keyword id="KW-0808">Transferase</keyword>
<keyword id="KW-0832">Ubl conjugation</keyword>
<name>DPOLB_XENLA</name>
<feature type="initiator methionine" description="Removed" evidence="1">
    <location>
        <position position="1"/>
    </location>
</feature>
<feature type="chain" id="PRO_0000218782" description="DNA polymerase beta">
    <location>
        <begin position="2"/>
        <end position="334"/>
    </location>
</feature>
<feature type="region of interest" description="DNA-binding" evidence="2">
    <location>
        <begin position="183"/>
        <end position="192"/>
    </location>
</feature>
<feature type="active site" description="Nucleophile; Schiff-base intermediate with DNA; for 5'-dRP lyase activity" evidence="2">
    <location>
        <position position="72"/>
    </location>
</feature>
<feature type="binding site" evidence="2">
    <location>
        <position position="60"/>
    </location>
    <ligand>
        <name>K(+)</name>
        <dbReference type="ChEBI" id="CHEBI:29103"/>
        <label>1</label>
    </ligand>
</feature>
<feature type="binding site" evidence="2">
    <location>
        <position position="60"/>
    </location>
    <ligand>
        <name>Na(+)</name>
        <dbReference type="ChEBI" id="CHEBI:29101"/>
        <label>1</label>
    </ligand>
</feature>
<feature type="binding site" evidence="2">
    <location>
        <position position="62"/>
    </location>
    <ligand>
        <name>K(+)</name>
        <dbReference type="ChEBI" id="CHEBI:29103"/>
        <label>1</label>
    </ligand>
</feature>
<feature type="binding site" evidence="2">
    <location>
        <position position="62"/>
    </location>
    <ligand>
        <name>Na(+)</name>
        <dbReference type="ChEBI" id="CHEBI:29101"/>
        <label>1</label>
    </ligand>
</feature>
<feature type="binding site" evidence="2">
    <location>
        <position position="65"/>
    </location>
    <ligand>
        <name>K(+)</name>
        <dbReference type="ChEBI" id="CHEBI:29103"/>
        <label>1</label>
    </ligand>
</feature>
<feature type="binding site" evidence="2">
    <location>
        <position position="65"/>
    </location>
    <ligand>
        <name>Na(+)</name>
        <dbReference type="ChEBI" id="CHEBI:29101"/>
        <label>1</label>
    </ligand>
</feature>
<feature type="binding site" evidence="2">
    <location>
        <position position="101"/>
    </location>
    <ligand>
        <name>K(+)</name>
        <dbReference type="ChEBI" id="CHEBI:29103"/>
        <label>2</label>
    </ligand>
</feature>
<feature type="binding site" evidence="2">
    <location>
        <position position="101"/>
    </location>
    <ligand>
        <name>Na(+)</name>
        <dbReference type="ChEBI" id="CHEBI:29101"/>
        <label>2</label>
    </ligand>
</feature>
<feature type="binding site" evidence="2">
    <location>
        <position position="103"/>
    </location>
    <ligand>
        <name>K(+)</name>
        <dbReference type="ChEBI" id="CHEBI:29103"/>
        <label>2</label>
    </ligand>
</feature>
<feature type="binding site" evidence="2">
    <location>
        <position position="103"/>
    </location>
    <ligand>
        <name>Na(+)</name>
        <dbReference type="ChEBI" id="CHEBI:29101"/>
        <label>2</label>
    </ligand>
</feature>
<feature type="binding site" evidence="2">
    <location>
        <position position="106"/>
    </location>
    <ligand>
        <name>K(+)</name>
        <dbReference type="ChEBI" id="CHEBI:29103"/>
        <label>2</label>
    </ligand>
</feature>
<feature type="binding site" evidence="2">
    <location>
        <position position="106"/>
    </location>
    <ligand>
        <name>Na(+)</name>
        <dbReference type="ChEBI" id="CHEBI:29101"/>
        <label>2</label>
    </ligand>
</feature>
<feature type="binding site" evidence="2">
    <location>
        <position position="149"/>
    </location>
    <ligand>
        <name>a 2'-deoxyribonucleoside 5'-triphosphate</name>
        <dbReference type="ChEBI" id="CHEBI:61560"/>
    </ligand>
</feature>
<feature type="binding site" evidence="2">
    <location>
        <position position="180"/>
    </location>
    <ligand>
        <name>a 2'-deoxyribonucleoside 5'-triphosphate</name>
        <dbReference type="ChEBI" id="CHEBI:61560"/>
    </ligand>
</feature>
<feature type="binding site" evidence="2">
    <location>
        <position position="183"/>
    </location>
    <ligand>
        <name>a 2'-deoxyribonucleoside 5'-triphosphate</name>
        <dbReference type="ChEBI" id="CHEBI:61560"/>
    </ligand>
</feature>
<feature type="binding site" evidence="2">
    <location>
        <position position="189"/>
    </location>
    <ligand>
        <name>a 2'-deoxyribonucleoside 5'-triphosphate</name>
        <dbReference type="ChEBI" id="CHEBI:61560"/>
    </ligand>
</feature>
<feature type="binding site" evidence="2">
    <location>
        <position position="190"/>
    </location>
    <ligand>
        <name>a 2'-deoxyribonucleoside 5'-triphosphate</name>
        <dbReference type="ChEBI" id="CHEBI:61560"/>
    </ligand>
</feature>
<feature type="binding site" evidence="2">
    <location>
        <position position="190"/>
    </location>
    <ligand>
        <name>Mg(2+)</name>
        <dbReference type="ChEBI" id="CHEBI:18420"/>
        <label>1</label>
    </ligand>
</feature>
<feature type="binding site" evidence="2">
    <location>
        <position position="190"/>
    </location>
    <ligand>
        <name>Mg(2+)</name>
        <dbReference type="ChEBI" id="CHEBI:18420"/>
        <label>2</label>
    </ligand>
</feature>
<feature type="binding site" evidence="2">
    <location>
        <position position="192"/>
    </location>
    <ligand>
        <name>Mg(2+)</name>
        <dbReference type="ChEBI" id="CHEBI:18420"/>
        <label>1</label>
    </ligand>
</feature>
<feature type="binding site" evidence="2">
    <location>
        <position position="192"/>
    </location>
    <ligand>
        <name>Mg(2+)</name>
        <dbReference type="ChEBI" id="CHEBI:18420"/>
        <label>2</label>
    </ligand>
</feature>
<feature type="binding site" evidence="2">
    <location>
        <position position="255"/>
    </location>
    <ligand>
        <name>Mg(2+)</name>
        <dbReference type="ChEBI" id="CHEBI:18420"/>
        <label>2</label>
    </ligand>
</feature>
<feature type="modified residue" description="Omega-N-methylarginine; by PRMT6" evidence="1">
    <location>
        <position position="83"/>
    </location>
</feature>
<feature type="modified residue" description="Omega-N-methylarginine; by PRMT6" evidence="1">
    <location>
        <position position="152"/>
    </location>
</feature>
<organism>
    <name type="scientific">Xenopus laevis</name>
    <name type="common">African clawed frog</name>
    <dbReference type="NCBI Taxonomy" id="8355"/>
    <lineage>
        <taxon>Eukaryota</taxon>
        <taxon>Metazoa</taxon>
        <taxon>Chordata</taxon>
        <taxon>Craniata</taxon>
        <taxon>Vertebrata</taxon>
        <taxon>Euteleostomi</taxon>
        <taxon>Amphibia</taxon>
        <taxon>Batrachia</taxon>
        <taxon>Anura</taxon>
        <taxon>Pipoidea</taxon>
        <taxon>Pipidae</taxon>
        <taxon>Xenopodinae</taxon>
        <taxon>Xenopus</taxon>
        <taxon>Xenopus</taxon>
    </lineage>
</organism>
<gene>
    <name type="primary">polb</name>
</gene>
<proteinExistence type="evidence at protein level"/>
<protein>
    <recommendedName>
        <fullName evidence="2">DNA polymerase beta</fullName>
        <ecNumber evidence="2">2.7.7.7</ecNumber>
    </recommendedName>
    <alternativeName>
        <fullName evidence="2">5'-deoxyribose-phosphate lyase</fullName>
        <shortName evidence="2">5'-dRP lyase</shortName>
        <ecNumber evidence="2">4.2.99.-</ecNumber>
    </alternativeName>
    <alternativeName>
        <fullName evidence="2">AP lyase</fullName>
        <ecNumber evidence="2">4.2.99.18</ecNumber>
    </alternativeName>
</protein>
<sequence>MSKRKAPQESPNEGITDFLVELANYERNVNRAIHKYNAYRKAASVIAKYPTKIKSGTEAKKLDGVGAKIAEKIDEFLATGKLRKLEKIRQDDTSSSINFLTRVTGIGPAAARKFFDEGIKTLDDLRNNEHKLNHHQKIGLKHFDDFEKRIPRKEMLQMQEIILDKVNNLDPEYIATVCGSFRRGAESSGDMDILLTHPDFTSESAKQPRLLHQVVQCLEDCNFITDTLVKGDTKFMGVCQLPCESDQDYPYRRIDIRLIPKDQYYCGVLYFTGSDIFNKNMRTHALEKGFTLNEYTLRPLGVTGIAGEPLPIDSEKDIFDYIQWKYREPKDRSE</sequence>
<evidence type="ECO:0000250" key="1"/>
<evidence type="ECO:0000250" key="2">
    <source>
        <dbReference type="UniProtKB" id="P06746"/>
    </source>
</evidence>
<evidence type="ECO:0000305" key="3"/>
<reference key="1">
    <citation type="journal article" date="1998" name="Eur. J. Biochem.">
        <title>Cloning, purification and characterization of DNA polymerase beta from Xenopus laevis -- studies on its potential role in DNA-end joining.</title>
        <authorList>
            <person name="Reichenberger S."/>
            <person name="Pfeiffer P."/>
        </authorList>
    </citation>
    <scope>NUCLEOTIDE SEQUENCE [MRNA]</scope>
    <scope>CHARACTERIZATION</scope>
</reference>
<reference key="2">
    <citation type="submission" date="2005-10" db="EMBL/GenBank/DDBJ databases">
        <authorList>
            <consortium name="NIH - Xenopus Gene Collection (XGC) project"/>
        </authorList>
    </citation>
    <scope>NUCLEOTIDE SEQUENCE [LARGE SCALE MRNA]</scope>
    <source>
        <tissue>Testis</tissue>
    </source>
</reference>
<comment type="function">
    <text evidence="2">Repair polymerase that plays a key role in base-excision repair. During this process, the damaged base is excised by specific DNA glycosylases, the DNA backbone is nicked at the abasic site by an apurinic/apyrimidic (AP) endonuclease, and POLB removes 5'-deoxyribose-phosphate from the preincised AP site acting as a 5'-deoxyribose-phosphate lyase (5'-dRP lyase); through its DNA polymerase activity, it adds one nucleotide to the 3' end of the arising single-nucleotide gap. Conducts 'gap-filling' DNA synthesis in a stepwise distributive fashion rather than in a processive fashion as for other DNA polymerases. It is also able to cleave sugar-phosphate bonds 3' to an intact AP site, acting as an AP lyase.</text>
</comment>
<comment type="catalytic activity">
    <reaction evidence="2">
        <text>DNA(n) + a 2'-deoxyribonucleoside 5'-triphosphate = DNA(n+1) + diphosphate</text>
        <dbReference type="Rhea" id="RHEA:22508"/>
        <dbReference type="Rhea" id="RHEA-COMP:17339"/>
        <dbReference type="Rhea" id="RHEA-COMP:17340"/>
        <dbReference type="ChEBI" id="CHEBI:33019"/>
        <dbReference type="ChEBI" id="CHEBI:61560"/>
        <dbReference type="ChEBI" id="CHEBI:173112"/>
        <dbReference type="EC" id="2.7.7.7"/>
    </reaction>
</comment>
<comment type="catalytic activity">
    <reaction evidence="2">
        <text>a 5'-end 2'-deoxyribose-2'-deoxyribonucleotide-DNA = (2E,4S)-4-hydroxypenten-2-al-5-phosphate + a 5'-end 5'-phospho-2'-deoxyribonucleoside-DNA + H(+)</text>
        <dbReference type="Rhea" id="RHEA:76255"/>
        <dbReference type="Rhea" id="RHEA-COMP:13180"/>
        <dbReference type="Rhea" id="RHEA-COMP:18657"/>
        <dbReference type="ChEBI" id="CHEBI:15378"/>
        <dbReference type="ChEBI" id="CHEBI:136412"/>
        <dbReference type="ChEBI" id="CHEBI:195194"/>
        <dbReference type="ChEBI" id="CHEBI:195195"/>
    </reaction>
</comment>
<comment type="catalytic activity">
    <reaction evidence="2">
        <text>2'-deoxyribonucleotide-(2'-deoxyribose 5'-phosphate)-2'-deoxyribonucleotide-DNA = a 3'-end 2'-deoxyribonucleotide-(2,3-dehydro-2,3-deoxyribose 5'-phosphate)-DNA + a 5'-end 5'-phospho-2'-deoxyribonucleoside-DNA + H(+)</text>
        <dbReference type="Rhea" id="RHEA:66592"/>
        <dbReference type="Rhea" id="RHEA-COMP:13180"/>
        <dbReference type="Rhea" id="RHEA-COMP:16897"/>
        <dbReference type="Rhea" id="RHEA-COMP:17067"/>
        <dbReference type="ChEBI" id="CHEBI:15378"/>
        <dbReference type="ChEBI" id="CHEBI:136412"/>
        <dbReference type="ChEBI" id="CHEBI:157695"/>
        <dbReference type="ChEBI" id="CHEBI:167181"/>
        <dbReference type="EC" id="4.2.99.18"/>
    </reaction>
</comment>
<comment type="cofactor">
    <cofactor evidence="2">
        <name>Mg(2+)</name>
        <dbReference type="ChEBI" id="CHEBI:18420"/>
    </cofactor>
    <text evidence="2">Binds 2 magnesium ions per subunit.</text>
</comment>
<comment type="subunit">
    <text>Monomer.</text>
</comment>
<comment type="subcellular location">
    <subcellularLocation>
        <location evidence="2">Nucleus</location>
    </subcellularLocation>
    <subcellularLocation>
        <location evidence="2">Cytoplasm</location>
    </subcellularLocation>
    <text evidence="2">Cytoplasmic in normal conditions. Translocates to the nucleus following DNA damage.</text>
</comment>
<comment type="PTM">
    <text evidence="1">Methylation by PRMT6 stimulates the polymerase activity by enhancing DNA binding and processivity.</text>
</comment>
<comment type="PTM">
    <text evidence="1">Ubiquitinated: monoubiquitinated by huwe1/arf-bp1. Monoubiquitinated protein is then the target of stub1/chip, which catalyzes polyubiquitination from monoubiquitin, leading to degradation by the proteasome. usp47 mediates the deubiquitination of monoubiquitinated protein, preventing polyubiquitination by STUB1/CHIP and its subsequent degradation (By similarity).</text>
</comment>
<comment type="similarity">
    <text evidence="3">Belongs to the DNA polymerase type-X family.</text>
</comment>
<accession>O57383</accession>
<accession>Q3KQ91</accession>